<evidence type="ECO:0000250" key="1"/>
<evidence type="ECO:0000255" key="2"/>
<evidence type="ECO:0000255" key="3">
    <source>
        <dbReference type="PROSITE-ProRule" id="PRU00220"/>
    </source>
</evidence>
<evidence type="ECO:0000256" key="4">
    <source>
        <dbReference type="SAM" id="MobiDB-lite"/>
    </source>
</evidence>
<evidence type="ECO:0000269" key="5">
    <source>
    </source>
</evidence>
<evidence type="ECO:0000305" key="6"/>
<name>CRDL1_RAT</name>
<protein>
    <recommendedName>
        <fullName>Chordin-like protein 1</fullName>
    </recommendedName>
    <alternativeName>
        <fullName>Kohjirin</fullName>
    </alternativeName>
    <alternativeName>
        <fullName>Neuralin-1</fullName>
    </alternativeName>
    <alternativeName>
        <fullName>Neurogenesin-1</fullName>
    </alternativeName>
    <alternativeName>
        <fullName>Ventroptin</fullName>
    </alternativeName>
</protein>
<comment type="function">
    <text evidence="1 5">Seems to antagonize the function of BMP4 by binding to it and preventing its interaction with receptors. Alters the fate commitment of neural stem cells from gliogenesis to neurogenesis. Contributes to neuronal differentiation of neural stem cells in the brain by preventing the adoption of a glial fate. May play a crucial role in dorsoventral axis formation. May play a role in embryonic bone formation. Plays a role during anterior segment eye development (By similarity).</text>
</comment>
<comment type="subcellular location">
    <subcellularLocation>
        <location evidence="6">Secreted</location>
    </subcellularLocation>
</comment>
<comment type="developmental stage">
    <text evidence="5">Ubiquitously expressed in neurogenic regions of the embryonic brain.</text>
</comment>
<comment type="caution">
    <text evidence="6">The sequence shown has an N-terminus according to mammalian orthologs. The original sequence from PubMed:14684875 gives a longer N-terminus and suggests a signal sequence of 97 AA.</text>
</comment>
<comment type="sequence caution" evidence="6">
    <conflict type="erroneous initiation">
        <sequence resource="EMBL-CDS" id="BAD06447"/>
    </conflict>
</comment>
<gene>
    <name type="primary">Chrdl1</name>
    <name type="synonym">Kjr</name>
    <name type="synonym">Ng1</name>
</gene>
<organism>
    <name type="scientific">Rattus norvegicus</name>
    <name type="common">Rat</name>
    <dbReference type="NCBI Taxonomy" id="10116"/>
    <lineage>
        <taxon>Eukaryota</taxon>
        <taxon>Metazoa</taxon>
        <taxon>Chordata</taxon>
        <taxon>Craniata</taxon>
        <taxon>Vertebrata</taxon>
        <taxon>Euteleostomi</taxon>
        <taxon>Mammalia</taxon>
        <taxon>Eutheria</taxon>
        <taxon>Euarchontoglires</taxon>
        <taxon>Glires</taxon>
        <taxon>Rodentia</taxon>
        <taxon>Myomorpha</taxon>
        <taxon>Muroidea</taxon>
        <taxon>Muridae</taxon>
        <taxon>Murinae</taxon>
        <taxon>Rattus</taxon>
    </lineage>
</organism>
<sequence length="447" mass="50560">MEGIKYIASLVFFFVFLEASKTEPVKHSETYCMFQDKKYRVGEKWHPYLEPYGLVYCVNCICSENGNVLCSRVRCPTLHCLSPVHIPHLCCPRCPDSLPPMNSKVTSKSCEYNGTTYQHGELFIAEGLFQNRQPNQCSQCSCSEGNVYCGLKTCPKLTCAFPVSVPDSCCRVCRGDGELSWEHSDADIFRQPANREARHSYLRSPYDPPPSRQAGGLPRFAGSRSHRGAVIDSQQASGTIVQIVINNKHKHGQVCVSNGKTYSHGESWHPNLRAFGIVECVLCTCNVTKQECKKIHCPNRYPCKYPQKLDGKCCKVCPEEPPSQNFDSKGSFCGEETMPVYEAVLVEDGETARKVALETEKPPQVEVHVWTIRKGILQHFHIEKISKEMFGGLHHFKLVTRTTMNQWKIFAEGEAQLSQMCSSRVCRTELEDLVQVLYLERPEKDHC</sequence>
<accession>Q76LD0</accession>
<feature type="signal peptide" evidence="2">
    <location>
        <begin position="1"/>
        <end position="22"/>
    </location>
</feature>
<feature type="chain" id="PRO_0000223676" description="Chordin-like protein 1">
    <location>
        <begin position="23"/>
        <end position="447"/>
    </location>
</feature>
<feature type="domain" description="VWFC 1" evidence="3">
    <location>
        <begin position="30"/>
        <end position="95"/>
    </location>
</feature>
<feature type="domain" description="VWFC 2" evidence="3">
    <location>
        <begin position="108"/>
        <end position="174"/>
    </location>
</feature>
<feature type="domain" description="VWFC 3" evidence="3">
    <location>
        <begin position="253"/>
        <end position="318"/>
    </location>
</feature>
<feature type="region of interest" description="Disordered" evidence="4">
    <location>
        <begin position="199"/>
        <end position="219"/>
    </location>
</feature>
<feature type="short sequence motif" description="Cell attachment site" evidence="2">
    <location>
        <begin position="174"/>
        <end position="176"/>
    </location>
</feature>
<feature type="glycosylation site" description="N-linked (GlcNAc...) asparagine" evidence="2">
    <location>
        <position position="113"/>
    </location>
</feature>
<feature type="glycosylation site" description="N-linked (GlcNAc...) asparagine" evidence="2">
    <location>
        <position position="286"/>
    </location>
</feature>
<proteinExistence type="evidence at transcript level"/>
<dbReference type="EMBL" id="AB080636">
    <property type="protein sequence ID" value="BAD06447.1"/>
    <property type="status" value="ALT_INIT"/>
    <property type="molecule type" value="mRNA"/>
</dbReference>
<dbReference type="RefSeq" id="NP_955796.1">
    <property type="nucleotide sequence ID" value="NM_199502.1"/>
</dbReference>
<dbReference type="SMR" id="Q76LD0"/>
<dbReference type="FunCoup" id="Q76LD0">
    <property type="interactions" value="30"/>
</dbReference>
<dbReference type="STRING" id="10116.ENSRNOP00000006008"/>
<dbReference type="GlyCosmos" id="Q76LD0">
    <property type="glycosylation" value="2 sites, No reported glycans"/>
</dbReference>
<dbReference type="GlyGen" id="Q76LD0">
    <property type="glycosylation" value="2 sites"/>
</dbReference>
<dbReference type="PhosphoSitePlus" id="Q76LD0"/>
<dbReference type="PaxDb" id="10116-ENSRNOP00000006008"/>
<dbReference type="GeneID" id="363455"/>
<dbReference type="KEGG" id="rno:363455"/>
<dbReference type="AGR" id="RGD:735215"/>
<dbReference type="CTD" id="91851"/>
<dbReference type="RGD" id="735215">
    <property type="gene designation" value="Chrdl1"/>
</dbReference>
<dbReference type="eggNOG" id="ENOG502QQFQ">
    <property type="taxonomic scope" value="Eukaryota"/>
</dbReference>
<dbReference type="InParanoid" id="Q76LD0"/>
<dbReference type="PhylomeDB" id="Q76LD0"/>
<dbReference type="Reactome" id="R-RNO-201451">
    <property type="pathway name" value="Signaling by BMP"/>
</dbReference>
<dbReference type="Reactome" id="R-RNO-381426">
    <property type="pathway name" value="Regulation of Insulin-like Growth Factor (IGF) transport and uptake by Insulin-like Growth Factor Binding Proteins (IGFBPs)"/>
</dbReference>
<dbReference type="Reactome" id="R-RNO-8957275">
    <property type="pathway name" value="Post-translational protein phosphorylation"/>
</dbReference>
<dbReference type="PRO" id="PR:Q76LD0"/>
<dbReference type="Proteomes" id="UP000002494">
    <property type="component" value="Unplaced"/>
</dbReference>
<dbReference type="GO" id="GO:0005576">
    <property type="term" value="C:extracellular region"/>
    <property type="evidence" value="ECO:0000266"/>
    <property type="project" value="RGD"/>
</dbReference>
<dbReference type="GO" id="GO:0005886">
    <property type="term" value="C:plasma membrane"/>
    <property type="evidence" value="ECO:0007669"/>
    <property type="project" value="GOC"/>
</dbReference>
<dbReference type="GO" id="GO:0045202">
    <property type="term" value="C:synapse"/>
    <property type="evidence" value="ECO:0007669"/>
    <property type="project" value="GOC"/>
</dbReference>
<dbReference type="GO" id="GO:0036122">
    <property type="term" value="F:BMP binding"/>
    <property type="evidence" value="ECO:0000266"/>
    <property type="project" value="RGD"/>
</dbReference>
<dbReference type="GO" id="GO:0050431">
    <property type="term" value="F:transforming growth factor beta binding"/>
    <property type="evidence" value="ECO:0000266"/>
    <property type="project" value="RGD"/>
</dbReference>
<dbReference type="GO" id="GO:0097113">
    <property type="term" value="P:AMPA glutamate receptor clustering"/>
    <property type="evidence" value="ECO:0000266"/>
    <property type="project" value="RGD"/>
</dbReference>
<dbReference type="GO" id="GO:0030509">
    <property type="term" value="P:BMP signaling pathway"/>
    <property type="evidence" value="ECO:0000266"/>
    <property type="project" value="RGD"/>
</dbReference>
<dbReference type="GO" id="GO:0030154">
    <property type="term" value="P:cell differentiation"/>
    <property type="evidence" value="ECO:0000318"/>
    <property type="project" value="GO_Central"/>
</dbReference>
<dbReference type="GO" id="GO:0001709">
    <property type="term" value="P:cell fate determination"/>
    <property type="evidence" value="ECO:0000315"/>
    <property type="project" value="RGD"/>
</dbReference>
<dbReference type="GO" id="GO:0000578">
    <property type="term" value="P:embryonic axis specification"/>
    <property type="evidence" value="ECO:0000266"/>
    <property type="project" value="RGD"/>
</dbReference>
<dbReference type="GO" id="GO:0098976">
    <property type="term" value="P:excitatory chemical synaptic transmission"/>
    <property type="evidence" value="ECO:0000266"/>
    <property type="project" value="RGD"/>
</dbReference>
<dbReference type="GO" id="GO:0001654">
    <property type="term" value="P:eye development"/>
    <property type="evidence" value="ECO:0000250"/>
    <property type="project" value="UniProtKB"/>
</dbReference>
<dbReference type="GO" id="GO:0030514">
    <property type="term" value="P:negative regulation of BMP signaling pathway"/>
    <property type="evidence" value="ECO:0000266"/>
    <property type="project" value="RGD"/>
</dbReference>
<dbReference type="GO" id="GO:0030182">
    <property type="term" value="P:neuron differentiation"/>
    <property type="evidence" value="ECO:0000315"/>
    <property type="project" value="RGD"/>
</dbReference>
<dbReference type="GO" id="GO:0001503">
    <property type="term" value="P:ossification"/>
    <property type="evidence" value="ECO:0007669"/>
    <property type="project" value="UniProtKB-KW"/>
</dbReference>
<dbReference type="GO" id="GO:0048167">
    <property type="term" value="P:regulation of synaptic plasticity"/>
    <property type="evidence" value="ECO:0000266"/>
    <property type="project" value="RGD"/>
</dbReference>
<dbReference type="GO" id="GO:0060074">
    <property type="term" value="P:synapse maturation"/>
    <property type="evidence" value="ECO:0000266"/>
    <property type="project" value="RGD"/>
</dbReference>
<dbReference type="FunFam" id="2.10.70.10:FF:000005">
    <property type="entry name" value="Chordin-like 1, isoform CRA_c"/>
    <property type="match status" value="2"/>
</dbReference>
<dbReference type="Gene3D" id="6.20.200.20">
    <property type="match status" value="1"/>
</dbReference>
<dbReference type="Gene3D" id="2.10.70.10">
    <property type="entry name" value="Complement Module, domain 1"/>
    <property type="match status" value="2"/>
</dbReference>
<dbReference type="InterPro" id="IPR045717">
    <property type="entry name" value="CHRDL1/2"/>
</dbReference>
<dbReference type="InterPro" id="IPR045716">
    <property type="entry name" value="CHRDL_1/2_C"/>
</dbReference>
<dbReference type="InterPro" id="IPR001007">
    <property type="entry name" value="VWF_dom"/>
</dbReference>
<dbReference type="PANTHER" id="PTHR46303:SF2">
    <property type="entry name" value="CHORDIN-LIKE PROTEIN 1"/>
    <property type="match status" value="1"/>
</dbReference>
<dbReference type="PANTHER" id="PTHR46303">
    <property type="entry name" value="VWFC DOMAIN-CONTAINING PROTEIN"/>
    <property type="match status" value="1"/>
</dbReference>
<dbReference type="Pfam" id="PF19548">
    <property type="entry name" value="CHRDL_1_2_C"/>
    <property type="match status" value="1"/>
</dbReference>
<dbReference type="Pfam" id="PF00093">
    <property type="entry name" value="VWC"/>
    <property type="match status" value="3"/>
</dbReference>
<dbReference type="SMART" id="SM00214">
    <property type="entry name" value="VWC"/>
    <property type="match status" value="3"/>
</dbReference>
<dbReference type="SUPFAM" id="SSF57603">
    <property type="entry name" value="FnI-like domain"/>
    <property type="match status" value="3"/>
</dbReference>
<dbReference type="PROSITE" id="PS01208">
    <property type="entry name" value="VWFC_1"/>
    <property type="match status" value="3"/>
</dbReference>
<dbReference type="PROSITE" id="PS50184">
    <property type="entry name" value="VWFC_2"/>
    <property type="match status" value="3"/>
</dbReference>
<keyword id="KW-0217">Developmental protein</keyword>
<keyword id="KW-0221">Differentiation</keyword>
<keyword id="KW-0325">Glycoprotein</keyword>
<keyword id="KW-0524">Neurogenesis</keyword>
<keyword id="KW-0892">Osteogenesis</keyword>
<keyword id="KW-1185">Reference proteome</keyword>
<keyword id="KW-0677">Repeat</keyword>
<keyword id="KW-0964">Secreted</keyword>
<keyword id="KW-0732">Signal</keyword>
<reference key="1">
    <citation type="journal article" date="2003" name="J. Neurosci.">
        <title>A novel secretory factor, neurogenesin-1, provides neurogenic environmental cues for neural stem cells in the adult hippocampus.</title>
        <authorList>
            <person name="Ueki T."/>
            <person name="Tanaka M."/>
            <person name="Yamashita K."/>
            <person name="Mikawa S."/>
            <person name="Qiu Z."/>
            <person name="Maragakis N.J."/>
            <person name="Hevner R.F."/>
            <person name="Miura N."/>
            <person name="Sugimura H."/>
            <person name="Sato K."/>
        </authorList>
    </citation>
    <scope>NUCLEOTIDE SEQUENCE [MRNA]</scope>
    <scope>FUNCTION</scope>
    <scope>DEVELOPMENTAL STAGE</scope>
</reference>